<protein>
    <recommendedName>
        <fullName evidence="4">Short-chain dehydrogenase/reductase SAT2</fullName>
        <ecNumber evidence="6">1.-.-.-</ecNumber>
    </recommendedName>
    <alternativeName>
        <fullName evidence="4">Satratoxin biosynthesis SC1 cluster protein 2</fullName>
    </alternativeName>
</protein>
<keyword id="KW-0521">NADP</keyword>
<keyword id="KW-0560">Oxidoreductase</keyword>
<proteinExistence type="inferred from homology"/>
<gene>
    <name evidence="4" type="primary">SAT2</name>
    <name type="ORF">S7711_07276</name>
</gene>
<name>SAT2_STACB</name>
<reference key="1">
    <citation type="journal article" date="2014" name="BMC Genomics">
        <title>Comparative genome sequencing reveals chemotype-specific gene clusters in the toxigenic black mold Stachybotrys.</title>
        <authorList>
            <person name="Semeiks J."/>
            <person name="Borek D."/>
            <person name="Otwinowski Z."/>
            <person name="Grishin N.V."/>
        </authorList>
    </citation>
    <scope>NUCLEOTIDE SEQUENCE [LARGE SCALE GENOMIC DNA]</scope>
    <scope>IDENTIFICATION</scope>
    <scope>FUNCTION</scope>
    <scope>PATHWAY</scope>
    <source>
        <strain>CBS 109288 / IBT 7711</strain>
    </source>
</reference>
<sequence>MPSLQVIRAAVAELPQGSSIVAAVAGGTTGIGSYLAKALATTFASHGSKLRVYIVGRNAGRAKTVISECQKISPGSDWRFIHATDLALISEVDKSSAEIIKQETEAPFHGELARLDLLYMTHAIPILGHKRTTEEGLDALESTIYYSRIRFILQLLPLLTASPRVAHVISVYAGGMENGVKPDEEPIGFVPAEIYHFNTVRKYTTFMKTFVFEELAEKYAERLSLIHIYPGLVDGPGFTQMPRWFRVLFTLMKPLTSLYMTRSEDCGMVMAYLATSRFSAKGSGQDAPTSTDTLAPKSSLGVVGGGAYSLGQRADSQTPQIMFEKSRKPDTSKKAWDHTIRTLDDIAKKNATIA</sequence>
<evidence type="ECO:0000250" key="1">
    <source>
        <dbReference type="UniProtKB" id="L0E2Z4"/>
    </source>
</evidence>
<evidence type="ECO:0000250" key="2">
    <source>
        <dbReference type="UniProtKB" id="O93868"/>
    </source>
</evidence>
<evidence type="ECO:0000269" key="3">
    <source>
    </source>
</evidence>
<evidence type="ECO:0000303" key="4">
    <source>
    </source>
</evidence>
<evidence type="ECO:0000305" key="5"/>
<evidence type="ECO:0000305" key="6">
    <source>
    </source>
</evidence>
<organism>
    <name type="scientific">Stachybotrys chartarum (strain CBS 109288 / IBT 7711)</name>
    <name type="common">Toxic black mold</name>
    <name type="synonym">Stilbospora chartarum</name>
    <dbReference type="NCBI Taxonomy" id="1280523"/>
    <lineage>
        <taxon>Eukaryota</taxon>
        <taxon>Fungi</taxon>
        <taxon>Dikarya</taxon>
        <taxon>Ascomycota</taxon>
        <taxon>Pezizomycotina</taxon>
        <taxon>Sordariomycetes</taxon>
        <taxon>Hypocreomycetidae</taxon>
        <taxon>Hypocreales</taxon>
        <taxon>Stachybotryaceae</taxon>
        <taxon>Stachybotrys</taxon>
    </lineage>
</organism>
<feature type="chain" id="PRO_0000442410" description="Short-chain dehydrogenase/reductase SAT2">
    <location>
        <begin position="1"/>
        <end position="354"/>
    </location>
</feature>
<feature type="binding site" evidence="1">
    <location>
        <position position="31"/>
    </location>
    <ligand>
        <name>NADP(+)</name>
        <dbReference type="ChEBI" id="CHEBI:58349"/>
    </ligand>
</feature>
<feature type="binding site" evidence="1">
    <location>
        <position position="85"/>
    </location>
    <ligand>
        <name>NADP(+)</name>
        <dbReference type="ChEBI" id="CHEBI:58349"/>
    </ligand>
</feature>
<feature type="binding site" evidence="2">
    <location>
        <position position="201"/>
    </location>
    <ligand>
        <name>NADP(+)</name>
        <dbReference type="ChEBI" id="CHEBI:58349"/>
    </ligand>
</feature>
<feature type="binding site" evidence="2">
    <location>
        <position position="233"/>
    </location>
    <ligand>
        <name>NADP(+)</name>
        <dbReference type="ChEBI" id="CHEBI:58349"/>
    </ligand>
</feature>
<comment type="function">
    <text evidence="6">Short-chain dehydrogenase/reductase; part of the satratoxin SC1 cluster involved in the biosynthesis of satratoxins, trichothecene mycotoxins that are associated with human food poisonings (PubMed:25015739). Satratoxins are suggested to be made by products of multiple gene clusters (SC1, SC2 and SC3) that encode 21 proteins in all, including polyketide synthases, acetyltransferases, and other enzymes expected to modify the trichothecene skeleton (PubMed:25015739). SC1 encodes 10 proteins, SAT1 to SAT10 (PubMed:25015739). The largest are SAT8, which encodes a putative polyketide synthase (PKS) with a conventional non-reducing architecture, and SAT10, a putative protein containing four ankyrin repeats and thus may be involved in protein scaffolding (PubMed:25015739). The putative short-chain reductase SAT3 may assist the PKS in some capacity (PubMed:25015739). SAT6 contains a secretory lipase domain and acts probably as a trichothecene esterase (PubMed:25015739). SAT5 encodes a putative acetyltransferase, and so, with SAT6, may affect endogenous protection from toxicity (PubMed:25015739). The probable transcription factor SAT9 may regulate the expression of the SC1 cluster (PubMed:25015739). SC2 encodes proteins SAT11 to SAT16, the largest of which encodes the putative reducing PKS SAT13 (PubMed:25015739). SAT11 is a cytochrome P450 monooxygenase, while SAT14 and SAT16 are probable acetyltransferases (PubMed:25015739). The SC2 cluster may be regulated by the transcription factor SAT15 (PubMed:25015739). SC3 is a small cluster that encodes 5 proteins, SAT17 to SAT21 (PubMed:25015739). SAT21 is a putative MFS-type transporter which may have a role in exporting secondary metabolites (PubMed:25015739). The four other proteins putatively encoded in SC3 include the taurine hydroxylase-like protein SAT17, the O-methyltransferase SAT18, the acetyltransferase SAT19, and the Cys6-type zinc finger SAT20, the latter being probably involved in regulation of SC3 expression (PubMed:25015739).</text>
</comment>
<comment type="pathway">
    <text evidence="3">Mycotoxin biosynthesis.</text>
</comment>
<comment type="miscellaneous">
    <text evidence="5">Trichothecenes are sesquiterpenoid toxins that act by inhibiting protein biosynthesis.</text>
</comment>
<comment type="similarity">
    <text evidence="5">Belongs to the short-chain dehydrogenases/reductases (SDR) family.</text>
</comment>
<dbReference type="EC" id="1.-.-.-" evidence="6"/>
<dbReference type="EMBL" id="KL647604">
    <property type="protein sequence ID" value="KEY74369.1"/>
    <property type="molecule type" value="Genomic_DNA"/>
</dbReference>
<dbReference type="SMR" id="A0A084B9Z0"/>
<dbReference type="HOGENOM" id="CLU_044999_0_0_1"/>
<dbReference type="OrthoDB" id="261155at5125"/>
<dbReference type="Proteomes" id="UP000028045">
    <property type="component" value="Unassembled WGS sequence"/>
</dbReference>
<dbReference type="GO" id="GO:0016491">
    <property type="term" value="F:oxidoreductase activity"/>
    <property type="evidence" value="ECO:0007669"/>
    <property type="project" value="UniProtKB-KW"/>
</dbReference>
<dbReference type="Gene3D" id="3.40.50.720">
    <property type="entry name" value="NAD(P)-binding Rossmann-like Domain"/>
    <property type="match status" value="1"/>
</dbReference>
<dbReference type="InterPro" id="IPR036291">
    <property type="entry name" value="NAD(P)-bd_dom_sf"/>
</dbReference>
<dbReference type="InterPro" id="IPR052228">
    <property type="entry name" value="Sec_Metab_Biosynth_Oxidored"/>
</dbReference>
<dbReference type="PANTHER" id="PTHR47534:SF3">
    <property type="entry name" value="ALCOHOL DEHYDROGENASE-LIKE C-TERMINAL DOMAIN-CONTAINING PROTEIN"/>
    <property type="match status" value="1"/>
</dbReference>
<dbReference type="PANTHER" id="PTHR47534">
    <property type="entry name" value="YALI0E05731P"/>
    <property type="match status" value="1"/>
</dbReference>
<dbReference type="SUPFAM" id="SSF51735">
    <property type="entry name" value="NAD(P)-binding Rossmann-fold domains"/>
    <property type="match status" value="1"/>
</dbReference>
<accession>A0A084B9Z0</accession>